<reference key="1">
    <citation type="journal article" date="2004" name="Nat. Genet.">
        <title>Evidence in the Legionella pneumophila genome for exploitation of host cell functions and high genome plasticity.</title>
        <authorList>
            <person name="Cazalet C."/>
            <person name="Rusniok C."/>
            <person name="Brueggemann H."/>
            <person name="Zidane N."/>
            <person name="Magnier A."/>
            <person name="Ma L."/>
            <person name="Tichit M."/>
            <person name="Jarraud S."/>
            <person name="Bouchier C."/>
            <person name="Vandenesch F."/>
            <person name="Kunst F."/>
            <person name="Etienne J."/>
            <person name="Glaser P."/>
            <person name="Buchrieser C."/>
        </authorList>
    </citation>
    <scope>NUCLEOTIDE SEQUENCE [LARGE SCALE GENOMIC DNA]</scope>
    <source>
        <strain>Lens</strain>
    </source>
</reference>
<sequence>MIAVIDVSGNNLTSLTNALIRLGGHFALTHDAQEIQKASHVILPGVGTARSGMTALQQNGLIDVLRTLTQPLLGICLGMQLLLEYSEEDDIPCLGLIPGVAELLKAERNHPVPHMGWNNLHWQKTSSLQQGLNNSDYVYFVHSYALKADDYALARCRYHEEFTAVVKKGNFYGMQFHPEKSADVGMVLLNNFLSLESKC</sequence>
<organism>
    <name type="scientific">Legionella pneumophila (strain Lens)</name>
    <dbReference type="NCBI Taxonomy" id="297245"/>
    <lineage>
        <taxon>Bacteria</taxon>
        <taxon>Pseudomonadati</taxon>
        <taxon>Pseudomonadota</taxon>
        <taxon>Gammaproteobacteria</taxon>
        <taxon>Legionellales</taxon>
        <taxon>Legionellaceae</taxon>
        <taxon>Legionella</taxon>
    </lineage>
</organism>
<protein>
    <recommendedName>
        <fullName evidence="1">Imidazole glycerol phosphate synthase subunit HisH 2</fullName>
        <ecNumber evidence="1">4.3.2.10</ecNumber>
    </recommendedName>
    <alternativeName>
        <fullName evidence="1">IGP synthase glutaminase subunit 2</fullName>
        <ecNumber evidence="1">3.5.1.2</ecNumber>
    </alternativeName>
    <alternativeName>
        <fullName evidence="1">IGP synthase subunit HisH 2</fullName>
    </alternativeName>
    <alternativeName>
        <fullName evidence="1">ImGP synthase subunit HisH 2</fullName>
        <shortName evidence="1">IGPS subunit HisH 2</shortName>
    </alternativeName>
</protein>
<evidence type="ECO:0000255" key="1">
    <source>
        <dbReference type="HAMAP-Rule" id="MF_00278"/>
    </source>
</evidence>
<name>HIS52_LEGPL</name>
<comment type="function">
    <text evidence="1">IGPS catalyzes the conversion of PRFAR and glutamine to IGP, AICAR and glutamate. The HisH subunit provides the glutamine amidotransferase activity that produces the ammonia necessary to HisF for the synthesis of IGP and AICAR.</text>
</comment>
<comment type="catalytic activity">
    <reaction evidence="1">
        <text>5-[(5-phospho-1-deoxy-D-ribulos-1-ylimino)methylamino]-1-(5-phospho-beta-D-ribosyl)imidazole-4-carboxamide + L-glutamine = D-erythro-1-(imidazol-4-yl)glycerol 3-phosphate + 5-amino-1-(5-phospho-beta-D-ribosyl)imidazole-4-carboxamide + L-glutamate + H(+)</text>
        <dbReference type="Rhea" id="RHEA:24793"/>
        <dbReference type="ChEBI" id="CHEBI:15378"/>
        <dbReference type="ChEBI" id="CHEBI:29985"/>
        <dbReference type="ChEBI" id="CHEBI:58278"/>
        <dbReference type="ChEBI" id="CHEBI:58359"/>
        <dbReference type="ChEBI" id="CHEBI:58475"/>
        <dbReference type="ChEBI" id="CHEBI:58525"/>
        <dbReference type="EC" id="4.3.2.10"/>
    </reaction>
</comment>
<comment type="catalytic activity">
    <reaction evidence="1">
        <text>L-glutamine + H2O = L-glutamate + NH4(+)</text>
        <dbReference type="Rhea" id="RHEA:15889"/>
        <dbReference type="ChEBI" id="CHEBI:15377"/>
        <dbReference type="ChEBI" id="CHEBI:28938"/>
        <dbReference type="ChEBI" id="CHEBI:29985"/>
        <dbReference type="ChEBI" id="CHEBI:58359"/>
        <dbReference type="EC" id="3.5.1.2"/>
    </reaction>
</comment>
<comment type="pathway">
    <text evidence="1">Amino-acid biosynthesis; L-histidine biosynthesis; L-histidine from 5-phospho-alpha-D-ribose 1-diphosphate: step 5/9.</text>
</comment>
<comment type="subunit">
    <text evidence="1">Heterodimer of HisH and HisF.</text>
</comment>
<comment type="subcellular location">
    <subcellularLocation>
        <location evidence="1">Cytoplasm</location>
    </subcellularLocation>
</comment>
<keyword id="KW-0028">Amino-acid biosynthesis</keyword>
<keyword id="KW-0963">Cytoplasm</keyword>
<keyword id="KW-0315">Glutamine amidotransferase</keyword>
<keyword id="KW-0368">Histidine biosynthesis</keyword>
<keyword id="KW-0378">Hydrolase</keyword>
<keyword id="KW-0456">Lyase</keyword>
<feature type="chain" id="PRO_0000231729" description="Imidazole glycerol phosphate synthase subunit HisH 2">
    <location>
        <begin position="1"/>
        <end position="199"/>
    </location>
</feature>
<feature type="domain" description="Glutamine amidotransferase type-1" evidence="1">
    <location>
        <begin position="1"/>
        <end position="199"/>
    </location>
</feature>
<feature type="active site" description="Nucleophile" evidence="1">
    <location>
        <position position="76"/>
    </location>
</feature>
<feature type="active site" evidence="1">
    <location>
        <position position="177"/>
    </location>
</feature>
<feature type="active site" evidence="1">
    <location>
        <position position="179"/>
    </location>
</feature>
<proteinExistence type="inferred from homology"/>
<dbReference type="EC" id="4.3.2.10" evidence="1"/>
<dbReference type="EC" id="3.5.1.2" evidence="1"/>
<dbReference type="EMBL" id="CR628337">
    <property type="protein sequence ID" value="CAH15443.1"/>
    <property type="molecule type" value="Genomic_DNA"/>
</dbReference>
<dbReference type="SMR" id="Q5WX94"/>
<dbReference type="KEGG" id="lpf:lpl1204"/>
<dbReference type="LegioList" id="lpl1204"/>
<dbReference type="HOGENOM" id="CLU_071837_0_0_6"/>
<dbReference type="UniPathway" id="UPA00031">
    <property type="reaction ID" value="UER00010"/>
</dbReference>
<dbReference type="Proteomes" id="UP000002517">
    <property type="component" value="Chromosome"/>
</dbReference>
<dbReference type="GO" id="GO:0005737">
    <property type="term" value="C:cytoplasm"/>
    <property type="evidence" value="ECO:0007669"/>
    <property type="project" value="UniProtKB-SubCell"/>
</dbReference>
<dbReference type="GO" id="GO:0004359">
    <property type="term" value="F:glutaminase activity"/>
    <property type="evidence" value="ECO:0007669"/>
    <property type="project" value="UniProtKB-EC"/>
</dbReference>
<dbReference type="GO" id="GO:0000107">
    <property type="term" value="F:imidazoleglycerol-phosphate synthase activity"/>
    <property type="evidence" value="ECO:0007669"/>
    <property type="project" value="UniProtKB-UniRule"/>
</dbReference>
<dbReference type="GO" id="GO:0016829">
    <property type="term" value="F:lyase activity"/>
    <property type="evidence" value="ECO:0007669"/>
    <property type="project" value="UniProtKB-KW"/>
</dbReference>
<dbReference type="GO" id="GO:0000105">
    <property type="term" value="P:L-histidine biosynthetic process"/>
    <property type="evidence" value="ECO:0007669"/>
    <property type="project" value="UniProtKB-UniRule"/>
</dbReference>
<dbReference type="CDD" id="cd01748">
    <property type="entry name" value="GATase1_IGP_Synthase"/>
    <property type="match status" value="1"/>
</dbReference>
<dbReference type="FunFam" id="3.40.50.880:FF:000009">
    <property type="entry name" value="Imidazole glycerol phosphate synthase subunit HisH"/>
    <property type="match status" value="1"/>
</dbReference>
<dbReference type="Gene3D" id="3.40.50.880">
    <property type="match status" value="1"/>
</dbReference>
<dbReference type="HAMAP" id="MF_00278">
    <property type="entry name" value="HisH"/>
    <property type="match status" value="1"/>
</dbReference>
<dbReference type="InterPro" id="IPR029062">
    <property type="entry name" value="Class_I_gatase-like"/>
</dbReference>
<dbReference type="InterPro" id="IPR017926">
    <property type="entry name" value="GATASE"/>
</dbReference>
<dbReference type="InterPro" id="IPR010139">
    <property type="entry name" value="Imidazole-glycPsynth_HisH"/>
</dbReference>
<dbReference type="NCBIfam" id="TIGR01855">
    <property type="entry name" value="IMP_synth_hisH"/>
    <property type="match status" value="1"/>
</dbReference>
<dbReference type="PANTHER" id="PTHR42701">
    <property type="entry name" value="IMIDAZOLE GLYCEROL PHOSPHATE SYNTHASE SUBUNIT HISH"/>
    <property type="match status" value="1"/>
</dbReference>
<dbReference type="PANTHER" id="PTHR42701:SF1">
    <property type="entry name" value="IMIDAZOLE GLYCEROL PHOSPHATE SYNTHASE SUBUNIT HISH"/>
    <property type="match status" value="1"/>
</dbReference>
<dbReference type="Pfam" id="PF00117">
    <property type="entry name" value="GATase"/>
    <property type="match status" value="1"/>
</dbReference>
<dbReference type="PIRSF" id="PIRSF000495">
    <property type="entry name" value="Amidotransf_hisH"/>
    <property type="match status" value="1"/>
</dbReference>
<dbReference type="PRINTS" id="PR00097">
    <property type="entry name" value="ANTSNTHASEII"/>
</dbReference>
<dbReference type="SUPFAM" id="SSF52317">
    <property type="entry name" value="Class I glutamine amidotransferase-like"/>
    <property type="match status" value="1"/>
</dbReference>
<dbReference type="PROSITE" id="PS51273">
    <property type="entry name" value="GATASE_TYPE_1"/>
    <property type="match status" value="1"/>
</dbReference>
<accession>Q5WX94</accession>
<gene>
    <name evidence="1" type="primary">hisH2</name>
    <name type="ordered locus">lpl1204</name>
</gene>